<protein>
    <recommendedName>
        <fullName>Uncharacterized protein C162.06c</fullName>
    </recommendedName>
</protein>
<sequence>MHRLFGRKPPTQPTASLTDAIDSLDKRSDSVEVKIAKLDAQLSVFQQKIANTRPGPGQTALKQRAMNVLRQKKIYESQLQQLQQQSFNMEQAAMTTESLKNTMATVQTMQETARQLKSQSKNVSIEKIEKLQDEIQDYMDAAGELNEVLGQNMTDINVDEEELDAELEALQQESSWLGDQSTAEKPSYLMPSNELPNFVDEEVAEPSTAQ</sequence>
<dbReference type="EMBL" id="CU329672">
    <property type="protein sequence ID" value="CAA19586.1"/>
    <property type="molecule type" value="Genomic_DNA"/>
</dbReference>
<dbReference type="PIR" id="T41025">
    <property type="entry name" value="T41025"/>
</dbReference>
<dbReference type="RefSeq" id="NP_588238.1">
    <property type="nucleotide sequence ID" value="NM_001023228.2"/>
</dbReference>
<dbReference type="SMR" id="O74422"/>
<dbReference type="BioGRID" id="275356">
    <property type="interactions" value="21"/>
</dbReference>
<dbReference type="FunCoup" id="O74422">
    <property type="interactions" value="329"/>
</dbReference>
<dbReference type="STRING" id="284812.O74422"/>
<dbReference type="iPTMnet" id="O74422"/>
<dbReference type="PaxDb" id="4896-SPCC162.06c.1"/>
<dbReference type="EnsemblFungi" id="SPCC162.06c.1">
    <property type="protein sequence ID" value="SPCC162.06c.1:pep"/>
    <property type="gene ID" value="SPCC162.06c"/>
</dbReference>
<dbReference type="PomBase" id="SPCC162.06c"/>
<dbReference type="VEuPathDB" id="FungiDB:SPCC162.06c"/>
<dbReference type="eggNOG" id="KOG1655">
    <property type="taxonomic scope" value="Eukaryota"/>
</dbReference>
<dbReference type="HOGENOM" id="CLU_079409_0_0_1"/>
<dbReference type="InParanoid" id="O74422"/>
<dbReference type="OMA" id="GVKQMQK"/>
<dbReference type="PhylomeDB" id="O74422"/>
<dbReference type="Reactome" id="R-SPO-917729">
    <property type="pathway name" value="Endosomal Sorting Complex Required For Transport (ESCRT)"/>
</dbReference>
<dbReference type="PRO" id="PR:O74422"/>
<dbReference type="Proteomes" id="UP000002485">
    <property type="component" value="Chromosome III"/>
</dbReference>
<dbReference type="GO" id="GO:0000329">
    <property type="term" value="C:fungal-type vacuole membrane"/>
    <property type="evidence" value="ECO:0000266"/>
    <property type="project" value="PomBase"/>
</dbReference>
<dbReference type="GO" id="GO:0005771">
    <property type="term" value="C:multivesicular body"/>
    <property type="evidence" value="ECO:0000318"/>
    <property type="project" value="GO_Central"/>
</dbReference>
<dbReference type="GO" id="GO:0006886">
    <property type="term" value="P:intracellular protein transport"/>
    <property type="evidence" value="ECO:0000305"/>
    <property type="project" value="PomBase"/>
</dbReference>
<dbReference type="GO" id="GO:0032511">
    <property type="term" value="P:late endosome to vacuole transport via multivesicular body sorting pathway"/>
    <property type="evidence" value="ECO:0000318"/>
    <property type="project" value="GO_Central"/>
</dbReference>
<dbReference type="GO" id="GO:0006900">
    <property type="term" value="P:vesicle budding from membrane"/>
    <property type="evidence" value="ECO:0000318"/>
    <property type="project" value="GO_Central"/>
</dbReference>
<dbReference type="Gene3D" id="6.10.250.1710">
    <property type="match status" value="1"/>
</dbReference>
<dbReference type="Gene3D" id="1.10.287.1060">
    <property type="entry name" value="ESAT-6-like"/>
    <property type="match status" value="1"/>
</dbReference>
<dbReference type="InterPro" id="IPR005024">
    <property type="entry name" value="Snf7_fam"/>
</dbReference>
<dbReference type="PANTHER" id="PTHR22761">
    <property type="entry name" value="CHARGED MULTIVESICULAR BODY PROTEIN"/>
    <property type="match status" value="1"/>
</dbReference>
<dbReference type="PANTHER" id="PTHR22761:SF12">
    <property type="entry name" value="CHARGED MULTIVESICULAR BODY PROTEIN 5"/>
    <property type="match status" value="1"/>
</dbReference>
<dbReference type="Pfam" id="PF03357">
    <property type="entry name" value="Snf7"/>
    <property type="match status" value="1"/>
</dbReference>
<organism>
    <name type="scientific">Schizosaccharomyces pombe (strain 972 / ATCC 24843)</name>
    <name type="common">Fission yeast</name>
    <dbReference type="NCBI Taxonomy" id="284812"/>
    <lineage>
        <taxon>Eukaryota</taxon>
        <taxon>Fungi</taxon>
        <taxon>Dikarya</taxon>
        <taxon>Ascomycota</taxon>
        <taxon>Taphrinomycotina</taxon>
        <taxon>Schizosaccharomycetes</taxon>
        <taxon>Schizosaccharomycetales</taxon>
        <taxon>Schizosaccharomycetaceae</taxon>
        <taxon>Schizosaccharomyces</taxon>
    </lineage>
</organism>
<accession>O74422</accession>
<gene>
    <name type="ORF">SPCC162.06c</name>
</gene>
<comment type="similarity">
    <text evidence="3">Belongs to the SNF7 family.</text>
</comment>
<reference key="1">
    <citation type="journal article" date="2002" name="Nature">
        <title>The genome sequence of Schizosaccharomyces pombe.</title>
        <authorList>
            <person name="Wood V."/>
            <person name="Gwilliam R."/>
            <person name="Rajandream M.A."/>
            <person name="Lyne M.H."/>
            <person name="Lyne R."/>
            <person name="Stewart A."/>
            <person name="Sgouros J.G."/>
            <person name="Peat N."/>
            <person name="Hayles J."/>
            <person name="Baker S.G."/>
            <person name="Basham D."/>
            <person name="Bowman S."/>
            <person name="Brooks K."/>
            <person name="Brown D."/>
            <person name="Brown S."/>
            <person name="Chillingworth T."/>
            <person name="Churcher C.M."/>
            <person name="Collins M."/>
            <person name="Connor R."/>
            <person name="Cronin A."/>
            <person name="Davis P."/>
            <person name="Feltwell T."/>
            <person name="Fraser A."/>
            <person name="Gentles S."/>
            <person name="Goble A."/>
            <person name="Hamlin N."/>
            <person name="Harris D.E."/>
            <person name="Hidalgo J."/>
            <person name="Hodgson G."/>
            <person name="Holroyd S."/>
            <person name="Hornsby T."/>
            <person name="Howarth S."/>
            <person name="Huckle E.J."/>
            <person name="Hunt S."/>
            <person name="Jagels K."/>
            <person name="James K.D."/>
            <person name="Jones L."/>
            <person name="Jones M."/>
            <person name="Leather S."/>
            <person name="McDonald S."/>
            <person name="McLean J."/>
            <person name="Mooney P."/>
            <person name="Moule S."/>
            <person name="Mungall K.L."/>
            <person name="Murphy L.D."/>
            <person name="Niblett D."/>
            <person name="Odell C."/>
            <person name="Oliver K."/>
            <person name="O'Neil S."/>
            <person name="Pearson D."/>
            <person name="Quail M.A."/>
            <person name="Rabbinowitsch E."/>
            <person name="Rutherford K.M."/>
            <person name="Rutter S."/>
            <person name="Saunders D."/>
            <person name="Seeger K."/>
            <person name="Sharp S."/>
            <person name="Skelton J."/>
            <person name="Simmonds M.N."/>
            <person name="Squares R."/>
            <person name="Squares S."/>
            <person name="Stevens K."/>
            <person name="Taylor K."/>
            <person name="Taylor R.G."/>
            <person name="Tivey A."/>
            <person name="Walsh S.V."/>
            <person name="Warren T."/>
            <person name="Whitehead S."/>
            <person name="Woodward J.R."/>
            <person name="Volckaert G."/>
            <person name="Aert R."/>
            <person name="Robben J."/>
            <person name="Grymonprez B."/>
            <person name="Weltjens I."/>
            <person name="Vanstreels E."/>
            <person name="Rieger M."/>
            <person name="Schaefer M."/>
            <person name="Mueller-Auer S."/>
            <person name="Gabel C."/>
            <person name="Fuchs M."/>
            <person name="Duesterhoeft A."/>
            <person name="Fritzc C."/>
            <person name="Holzer E."/>
            <person name="Moestl D."/>
            <person name="Hilbert H."/>
            <person name="Borzym K."/>
            <person name="Langer I."/>
            <person name="Beck A."/>
            <person name="Lehrach H."/>
            <person name="Reinhardt R."/>
            <person name="Pohl T.M."/>
            <person name="Eger P."/>
            <person name="Zimmermann W."/>
            <person name="Wedler H."/>
            <person name="Wambutt R."/>
            <person name="Purnelle B."/>
            <person name="Goffeau A."/>
            <person name="Cadieu E."/>
            <person name="Dreano S."/>
            <person name="Gloux S."/>
            <person name="Lelaure V."/>
            <person name="Mottier S."/>
            <person name="Galibert F."/>
            <person name="Aves S.J."/>
            <person name="Xiang Z."/>
            <person name="Hunt C."/>
            <person name="Moore K."/>
            <person name="Hurst S.M."/>
            <person name="Lucas M."/>
            <person name="Rochet M."/>
            <person name="Gaillardin C."/>
            <person name="Tallada V.A."/>
            <person name="Garzon A."/>
            <person name="Thode G."/>
            <person name="Daga R.R."/>
            <person name="Cruzado L."/>
            <person name="Jimenez J."/>
            <person name="Sanchez M."/>
            <person name="del Rey F."/>
            <person name="Benito J."/>
            <person name="Dominguez A."/>
            <person name="Revuelta J.L."/>
            <person name="Moreno S."/>
            <person name="Armstrong J."/>
            <person name="Forsburg S.L."/>
            <person name="Cerutti L."/>
            <person name="Lowe T."/>
            <person name="McCombie W.R."/>
            <person name="Paulsen I."/>
            <person name="Potashkin J."/>
            <person name="Shpakovski G.V."/>
            <person name="Ussery D."/>
            <person name="Barrell B.G."/>
            <person name="Nurse P."/>
        </authorList>
    </citation>
    <scope>NUCLEOTIDE SEQUENCE [LARGE SCALE GENOMIC DNA]</scope>
    <source>
        <strain>972 / ATCC 24843</strain>
    </source>
</reference>
<evidence type="ECO:0000255" key="1"/>
<evidence type="ECO:0000256" key="2">
    <source>
        <dbReference type="SAM" id="MobiDB-lite"/>
    </source>
</evidence>
<evidence type="ECO:0000305" key="3"/>
<feature type="chain" id="PRO_0000303921" description="Uncharacterized protein C162.06c">
    <location>
        <begin position="1"/>
        <end position="210"/>
    </location>
</feature>
<feature type="region of interest" description="Disordered" evidence="2">
    <location>
        <begin position="1"/>
        <end position="21"/>
    </location>
</feature>
<feature type="region of interest" description="Disordered" evidence="2">
    <location>
        <begin position="168"/>
        <end position="210"/>
    </location>
</feature>
<feature type="coiled-coil region" evidence="1">
    <location>
        <begin position="21"/>
        <end position="175"/>
    </location>
</feature>
<feature type="compositionally biased region" description="Polar residues" evidence="2">
    <location>
        <begin position="174"/>
        <end position="184"/>
    </location>
</feature>
<proteinExistence type="inferred from homology"/>
<name>YQ56_SCHPO</name>
<keyword id="KW-0175">Coiled coil</keyword>
<keyword id="KW-1185">Reference proteome</keyword>